<dbReference type="EMBL" id="CP001217">
    <property type="protein sequence ID" value="ACJ08316.1"/>
    <property type="molecule type" value="Genomic_DNA"/>
</dbReference>
<dbReference type="SMR" id="B6JN38"/>
<dbReference type="KEGG" id="hpp:HPP12_1164"/>
<dbReference type="HOGENOM" id="CLU_086499_3_2_7"/>
<dbReference type="Proteomes" id="UP000008198">
    <property type="component" value="Chromosome"/>
</dbReference>
<dbReference type="GO" id="GO:0022625">
    <property type="term" value="C:cytosolic large ribosomal subunit"/>
    <property type="evidence" value="ECO:0007669"/>
    <property type="project" value="TreeGrafter"/>
</dbReference>
<dbReference type="GO" id="GO:0003729">
    <property type="term" value="F:mRNA binding"/>
    <property type="evidence" value="ECO:0007669"/>
    <property type="project" value="TreeGrafter"/>
</dbReference>
<dbReference type="GO" id="GO:0003735">
    <property type="term" value="F:structural constituent of ribosome"/>
    <property type="evidence" value="ECO:0007669"/>
    <property type="project" value="InterPro"/>
</dbReference>
<dbReference type="GO" id="GO:0006412">
    <property type="term" value="P:translation"/>
    <property type="evidence" value="ECO:0007669"/>
    <property type="project" value="UniProtKB-UniRule"/>
</dbReference>
<dbReference type="CDD" id="cd00387">
    <property type="entry name" value="Ribosomal_L7_L12"/>
    <property type="match status" value="1"/>
</dbReference>
<dbReference type="FunFam" id="1.20.5.710:FF:000004">
    <property type="entry name" value="50S ribosomal protein L7/L12"/>
    <property type="match status" value="1"/>
</dbReference>
<dbReference type="FunFam" id="3.30.1390.10:FF:000001">
    <property type="entry name" value="50S ribosomal protein L7/L12"/>
    <property type="match status" value="1"/>
</dbReference>
<dbReference type="Gene3D" id="3.30.1390.10">
    <property type="match status" value="1"/>
</dbReference>
<dbReference type="Gene3D" id="1.20.5.710">
    <property type="entry name" value="Single helix bin"/>
    <property type="match status" value="1"/>
</dbReference>
<dbReference type="HAMAP" id="MF_00368">
    <property type="entry name" value="Ribosomal_bL12"/>
    <property type="match status" value="1"/>
</dbReference>
<dbReference type="InterPro" id="IPR000206">
    <property type="entry name" value="Ribosomal_bL12"/>
</dbReference>
<dbReference type="InterPro" id="IPR013823">
    <property type="entry name" value="Ribosomal_bL12_C"/>
</dbReference>
<dbReference type="InterPro" id="IPR014719">
    <property type="entry name" value="Ribosomal_bL12_C/ClpS-like"/>
</dbReference>
<dbReference type="InterPro" id="IPR008932">
    <property type="entry name" value="Ribosomal_bL12_oligo"/>
</dbReference>
<dbReference type="InterPro" id="IPR036235">
    <property type="entry name" value="Ribosomal_bL12_oligo_N_sf"/>
</dbReference>
<dbReference type="NCBIfam" id="TIGR00855">
    <property type="entry name" value="L12"/>
    <property type="match status" value="1"/>
</dbReference>
<dbReference type="PANTHER" id="PTHR45987">
    <property type="entry name" value="39S RIBOSOMAL PROTEIN L12"/>
    <property type="match status" value="1"/>
</dbReference>
<dbReference type="PANTHER" id="PTHR45987:SF4">
    <property type="entry name" value="LARGE RIBOSOMAL SUBUNIT PROTEIN BL12M"/>
    <property type="match status" value="1"/>
</dbReference>
<dbReference type="Pfam" id="PF00542">
    <property type="entry name" value="Ribosomal_L12"/>
    <property type="match status" value="1"/>
</dbReference>
<dbReference type="Pfam" id="PF16320">
    <property type="entry name" value="Ribosomal_L12_N"/>
    <property type="match status" value="1"/>
</dbReference>
<dbReference type="SUPFAM" id="SSF54736">
    <property type="entry name" value="ClpS-like"/>
    <property type="match status" value="1"/>
</dbReference>
<dbReference type="SUPFAM" id="SSF48300">
    <property type="entry name" value="Ribosomal protein L7/12, oligomerisation (N-terminal) domain"/>
    <property type="match status" value="1"/>
</dbReference>
<accession>B6JN38</accession>
<name>RL7_HELP2</name>
<proteinExistence type="inferred from homology"/>
<evidence type="ECO:0000255" key="1">
    <source>
        <dbReference type="HAMAP-Rule" id="MF_00368"/>
    </source>
</evidence>
<evidence type="ECO:0000305" key="2"/>
<sequence>MAISKEEVLEYIGSLSVLELAELVKMFEEKFGVSATPTVVAGAAVAGGAAAESEEKTEFNVILADSGAEKIKVIKVVREITGLGLKEAKDATEKTPHVLKEGVNKEEAETIKKKLEEVGAKVEVK</sequence>
<keyword id="KW-0687">Ribonucleoprotein</keyword>
<keyword id="KW-0689">Ribosomal protein</keyword>
<reference key="1">
    <citation type="submission" date="2008-10" db="EMBL/GenBank/DDBJ databases">
        <title>The complete genome sequence of Helicobacter pylori strain P12.</title>
        <authorList>
            <person name="Fischer W."/>
            <person name="Windhager L."/>
            <person name="Karnholz A."/>
            <person name="Zeiller M."/>
            <person name="Zimmer R."/>
            <person name="Haas R."/>
        </authorList>
    </citation>
    <scope>NUCLEOTIDE SEQUENCE [LARGE SCALE GENOMIC DNA]</scope>
    <source>
        <strain>P12</strain>
    </source>
</reference>
<organism>
    <name type="scientific">Helicobacter pylori (strain P12)</name>
    <dbReference type="NCBI Taxonomy" id="570508"/>
    <lineage>
        <taxon>Bacteria</taxon>
        <taxon>Pseudomonadati</taxon>
        <taxon>Campylobacterota</taxon>
        <taxon>Epsilonproteobacteria</taxon>
        <taxon>Campylobacterales</taxon>
        <taxon>Helicobacteraceae</taxon>
        <taxon>Helicobacter</taxon>
    </lineage>
</organism>
<comment type="function">
    <text evidence="1">Forms part of the ribosomal stalk which helps the ribosome interact with GTP-bound translation factors. Is thus essential for accurate translation.</text>
</comment>
<comment type="subunit">
    <text evidence="1">Homodimer. Part of the ribosomal stalk of the 50S ribosomal subunit. Forms a multimeric L10(L12)X complex, where L10 forms an elongated spine to which 2 to 4 L12 dimers bind in a sequential fashion. Binds GTP-bound translation factors.</text>
</comment>
<comment type="similarity">
    <text evidence="1">Belongs to the bacterial ribosomal protein bL12 family.</text>
</comment>
<gene>
    <name evidence="1" type="primary">rplL</name>
    <name type="ordered locus">HPP12_1164</name>
</gene>
<protein>
    <recommendedName>
        <fullName evidence="1">Large ribosomal subunit protein bL12</fullName>
    </recommendedName>
    <alternativeName>
        <fullName evidence="2">50S ribosomal protein L7/L12</fullName>
    </alternativeName>
</protein>
<feature type="chain" id="PRO_1000121445" description="Large ribosomal subunit protein bL12">
    <location>
        <begin position="1"/>
        <end position="125"/>
    </location>
</feature>